<organismHost>
    <name type="scientific">Ornithodoros</name>
    <name type="common">relapsing fever ticks</name>
    <dbReference type="NCBI Taxonomy" id="6937"/>
</organismHost>
<organismHost>
    <name type="scientific">Phacochoerus aethiopicus</name>
    <name type="common">Warthog</name>
    <dbReference type="NCBI Taxonomy" id="85517"/>
</organismHost>
<organismHost>
    <name type="scientific">Phacochoerus africanus</name>
    <name type="common">Warthog</name>
    <dbReference type="NCBI Taxonomy" id="41426"/>
</organismHost>
<organismHost>
    <name type="scientific">Potamochoerus larvatus</name>
    <name type="common">Bushpig</name>
    <dbReference type="NCBI Taxonomy" id="273792"/>
</organismHost>
<organismHost>
    <name type="scientific">Sus scrofa</name>
    <name type="common">Pig</name>
    <dbReference type="NCBI Taxonomy" id="9823"/>
</organismHost>
<gene>
    <name type="ordered locus">Mal-142</name>
    <name type="ORF">k4R</name>
    <name type="ORF">k5R</name>
</gene>
<dbReference type="EC" id="3.1.21.-" evidence="3"/>
<dbReference type="EMBL" id="X71982">
    <property type="protein sequence ID" value="CAA50842.1"/>
    <property type="status" value="ALT_FRAME"/>
    <property type="molecule type" value="Genomic_DNA"/>
</dbReference>
<dbReference type="EMBL" id="AY261361">
    <property type="status" value="NOT_ANNOTATED_CDS"/>
    <property type="molecule type" value="Genomic_DNA"/>
</dbReference>
<dbReference type="SMR" id="Q65246"/>
<dbReference type="Proteomes" id="UP000000860">
    <property type="component" value="Segment"/>
</dbReference>
<dbReference type="GO" id="GO:0030430">
    <property type="term" value="C:host cell cytoplasm"/>
    <property type="evidence" value="ECO:0007669"/>
    <property type="project" value="UniProtKB-SubCell"/>
</dbReference>
<dbReference type="GO" id="GO:0042025">
    <property type="term" value="C:host cell nucleus"/>
    <property type="evidence" value="ECO:0007669"/>
    <property type="project" value="UniProtKB-SubCell"/>
</dbReference>
<dbReference type="GO" id="GO:0044423">
    <property type="term" value="C:virion component"/>
    <property type="evidence" value="ECO:0007669"/>
    <property type="project" value="UniProtKB-KW"/>
</dbReference>
<dbReference type="GO" id="GO:0003677">
    <property type="term" value="F:DNA binding"/>
    <property type="evidence" value="ECO:0007669"/>
    <property type="project" value="InterPro"/>
</dbReference>
<dbReference type="GO" id="GO:0003906">
    <property type="term" value="F:DNA-(apurinic or apyrimidinic site) endonuclease activity"/>
    <property type="evidence" value="ECO:0007669"/>
    <property type="project" value="TreeGrafter"/>
</dbReference>
<dbReference type="GO" id="GO:0004519">
    <property type="term" value="F:endonuclease activity"/>
    <property type="evidence" value="ECO:0007669"/>
    <property type="project" value="UniProtKB-KW"/>
</dbReference>
<dbReference type="GO" id="GO:0004527">
    <property type="term" value="F:exonuclease activity"/>
    <property type="evidence" value="ECO:0007669"/>
    <property type="project" value="UniProtKB-KW"/>
</dbReference>
<dbReference type="GO" id="GO:0008081">
    <property type="term" value="F:phosphoric diester hydrolase activity"/>
    <property type="evidence" value="ECO:0007669"/>
    <property type="project" value="TreeGrafter"/>
</dbReference>
<dbReference type="GO" id="GO:0008270">
    <property type="term" value="F:zinc ion binding"/>
    <property type="evidence" value="ECO:0007669"/>
    <property type="project" value="InterPro"/>
</dbReference>
<dbReference type="GO" id="GO:0006284">
    <property type="term" value="P:base-excision repair"/>
    <property type="evidence" value="ECO:0007669"/>
    <property type="project" value="TreeGrafter"/>
</dbReference>
<dbReference type="CDD" id="cd00019">
    <property type="entry name" value="AP2Ec"/>
    <property type="match status" value="1"/>
</dbReference>
<dbReference type="FunFam" id="3.20.20.150:FF:000028">
    <property type="entry name" value="Probable AP endonuclease"/>
    <property type="match status" value="1"/>
</dbReference>
<dbReference type="Gene3D" id="3.20.20.150">
    <property type="entry name" value="Divalent-metal-dependent TIM barrel enzymes"/>
    <property type="match status" value="1"/>
</dbReference>
<dbReference type="InterPro" id="IPR001719">
    <property type="entry name" value="AP_endonuc_2"/>
</dbReference>
<dbReference type="InterPro" id="IPR018246">
    <property type="entry name" value="AP_endonuc_F2_Zn_BS"/>
</dbReference>
<dbReference type="InterPro" id="IPR036237">
    <property type="entry name" value="Xyl_isomerase-like_sf"/>
</dbReference>
<dbReference type="InterPro" id="IPR013022">
    <property type="entry name" value="Xyl_isomerase-like_TIM-brl"/>
</dbReference>
<dbReference type="PANTHER" id="PTHR21445:SF0">
    <property type="entry name" value="APURINIC-APYRIMIDINIC ENDONUCLEASE"/>
    <property type="match status" value="1"/>
</dbReference>
<dbReference type="PANTHER" id="PTHR21445">
    <property type="entry name" value="ENDONUCLEASE IV ENDODEOXYRIBONUCLEASE IV"/>
    <property type="match status" value="1"/>
</dbReference>
<dbReference type="Pfam" id="PF01261">
    <property type="entry name" value="AP_endonuc_2"/>
    <property type="match status" value="1"/>
</dbReference>
<dbReference type="SMART" id="SM00518">
    <property type="entry name" value="AP2Ec"/>
    <property type="match status" value="1"/>
</dbReference>
<dbReference type="SUPFAM" id="SSF51658">
    <property type="entry name" value="Xylose isomerase-like"/>
    <property type="match status" value="1"/>
</dbReference>
<dbReference type="PROSITE" id="PS00731">
    <property type="entry name" value="AP_NUCLEASE_F2_3"/>
    <property type="match status" value="1"/>
</dbReference>
<dbReference type="PROSITE" id="PS51432">
    <property type="entry name" value="AP_NUCLEASE_F2_4"/>
    <property type="match status" value="1"/>
</dbReference>
<organism>
    <name type="scientific">African swine fever virus (isolate Tick/Malawi/Lil 20-1/1983)</name>
    <name type="common">ASFV</name>
    <dbReference type="NCBI Taxonomy" id="10500"/>
    <lineage>
        <taxon>Viruses</taxon>
        <taxon>Varidnaviria</taxon>
        <taxon>Bamfordvirae</taxon>
        <taxon>Nucleocytoviricota</taxon>
        <taxon>Pokkesviricetes</taxon>
        <taxon>Asfuvirales</taxon>
        <taxon>Asfarviridae</taxon>
        <taxon>Asfivirus</taxon>
        <taxon>African swine fever virus</taxon>
    </lineage>
</organism>
<accession>Q65246</accession>
<name>APE_ASFM2</name>
<comment type="function">
    <text evidence="3 5">Endonuclease that plays a role in DNA repair (By similarity). Cleaves phosphodiester bonds on the 5' side of apurinic or apyrimidinic sites (AP sites) (By similarity). In addition to endonuclease activity, the ASFV enzyme has a proofreading 3'-5' exonuclease activity that is considerably more efficient in the elimination of a mismatch than in that of a correctly paired base (By similarity). Displays 3'-phosphatase and 3'-repair diesterase activities (By similarity). The single nucleotide gaps generated by the AP endonuclease are filled by the viral AP endonuclease and DNA ligase (Probable).</text>
</comment>
<comment type="cofactor">
    <cofactor evidence="4">
        <name>Zn(2+)</name>
        <dbReference type="ChEBI" id="CHEBI:29105"/>
    </cofactor>
    <text evidence="2">Binds 3 Zn(2+) ions.</text>
</comment>
<comment type="subcellular location">
    <subcellularLocation>
        <location evidence="3">Host nucleus</location>
    </subcellularLocation>
    <subcellularLocation>
        <location evidence="3">Host cytoplasm</location>
    </subcellularLocation>
    <subcellularLocation>
        <location evidence="3">Virion</location>
    </subcellularLocation>
    <text evidence="3">The early enzyme is localized in the nucleus and the cytoplasm, while the late protein is found only in the cytoplasm (By similarity). Found in association with viral nucleoid (By similarity).</text>
</comment>
<comment type="induction">
    <text evidence="5">Expressed in the early phase of the viral replicative cycle and accumulates at later times.</text>
</comment>
<comment type="miscellaneous">
    <text evidence="1">Consistent with its intracellular location, ASFV encodes its own replicative DNA polymerase and three base excision repair enzymes: a class II AP endonuclease, the repair polymerase Pol X, and an ATP-dependent DNA ligase.</text>
</comment>
<comment type="similarity">
    <text evidence="4">Belongs to the AP endonuclease 2 family.</text>
</comment>
<comment type="sequence caution" evidence="5">
    <conflict type="frameshift">
        <sequence resource="EMBL-CDS" id="CAA50842"/>
    </conflict>
</comment>
<feature type="chain" id="PRO_0000373140" description="Probable AP endonuclease">
    <location>
        <begin position="1"/>
        <end position="296"/>
    </location>
</feature>
<feature type="binding site" evidence="2">
    <location>
        <position position="78"/>
    </location>
    <ligand>
        <name>Zn(2+)</name>
        <dbReference type="ChEBI" id="CHEBI:29105"/>
        <label>1</label>
    </ligand>
</feature>
<feature type="binding site" evidence="2">
    <location>
        <position position="115"/>
    </location>
    <ligand>
        <name>Zn(2+)</name>
        <dbReference type="ChEBI" id="CHEBI:29105"/>
        <label>2</label>
    </ligand>
</feature>
<feature type="binding site" evidence="4">
    <location>
        <position position="142"/>
    </location>
    <ligand>
        <name>Zn(2+)</name>
        <dbReference type="ChEBI" id="CHEBI:29105"/>
        <label>2</label>
    </ligand>
</feature>
<feature type="binding site" evidence="4">
    <location>
        <position position="182"/>
    </location>
    <ligand>
        <name>Zn(2+)</name>
        <dbReference type="ChEBI" id="CHEBI:29105"/>
        <label>3</label>
    </ligand>
</feature>
<feature type="binding site" evidence="4">
    <location>
        <position position="218"/>
    </location>
    <ligand>
        <name>Zn(2+)</name>
        <dbReference type="ChEBI" id="CHEBI:29105"/>
        <label>2</label>
    </ligand>
</feature>
<feature type="binding site" evidence="4">
    <location>
        <position position="231"/>
    </location>
    <ligand>
        <name>Zn(2+)</name>
        <dbReference type="ChEBI" id="CHEBI:29105"/>
        <label>3</label>
    </ligand>
</feature>
<feature type="binding site" evidence="4">
    <location>
        <position position="233"/>
    </location>
    <ligand>
        <name>Zn(2+)</name>
        <dbReference type="ChEBI" id="CHEBI:29105"/>
        <label>3</label>
    </ligand>
</feature>
<feature type="binding site" evidence="2">
    <location>
        <position position="271"/>
    </location>
    <ligand>
        <name>Zn(2+)</name>
        <dbReference type="ChEBI" id="CHEBI:29105"/>
        <label>1</label>
    </ligand>
</feature>
<feature type="disulfide bond" evidence="2">
    <location>
        <begin position="16"/>
        <end position="20"/>
    </location>
</feature>
<proteinExistence type="inferred from homology"/>
<reference key="1">
    <citation type="journal article" date="1994" name="J. Gen. Virol.">
        <title>Nucleotide sequence of a 55 kbp region from the right end of the genome of a pathogenic African swine fever virus isolate (Malawi LIL20/1).</title>
        <authorList>
            <person name="Dixon L.K."/>
            <person name="Twigg S.R.F."/>
            <person name="Baylis S.A."/>
            <person name="Vydelingum S."/>
            <person name="Bristow C."/>
            <person name="Hammond J.M."/>
            <person name="Smith G.L."/>
        </authorList>
    </citation>
    <scope>NUCLEOTIDE SEQUENCE [GENOMIC DNA]</scope>
</reference>
<reference key="2">
    <citation type="submission" date="2003-03" db="EMBL/GenBank/DDBJ databases">
        <title>African swine fever virus genomes.</title>
        <authorList>
            <person name="Kutish G.F."/>
            <person name="Rock D.L."/>
        </authorList>
    </citation>
    <scope>NUCLEOTIDE SEQUENCE [LARGE SCALE GENOMIC DNA]</scope>
</reference>
<protein>
    <recommendedName>
        <fullName evidence="3">Probable AP endonuclease</fullName>
        <shortName evidence="3">APE</shortName>
        <ecNumber evidence="3">3.1.21.-</ecNumber>
    </recommendedName>
</protein>
<evidence type="ECO:0000250" key="1"/>
<evidence type="ECO:0000250" key="2">
    <source>
        <dbReference type="UniProtKB" id="P0C9C6"/>
    </source>
</evidence>
<evidence type="ECO:0000250" key="3">
    <source>
        <dbReference type="UniProtKB" id="Q65202"/>
    </source>
</evidence>
<evidence type="ECO:0000255" key="4">
    <source>
        <dbReference type="PROSITE-ProRule" id="PRU00763"/>
    </source>
</evidence>
<evidence type="ECO:0000305" key="5"/>
<keyword id="KW-1015">Disulfide bond</keyword>
<keyword id="KW-0227">DNA damage</keyword>
<keyword id="KW-0234">DNA repair</keyword>
<keyword id="KW-0244">Early protein</keyword>
<keyword id="KW-0255">Endonuclease</keyword>
<keyword id="KW-0269">Exonuclease</keyword>
<keyword id="KW-1035">Host cytoplasm</keyword>
<keyword id="KW-1048">Host nucleus</keyword>
<keyword id="KW-0378">Hydrolase</keyword>
<keyword id="KW-0479">Metal-binding</keyword>
<keyword id="KW-0540">Nuclease</keyword>
<keyword id="KW-0946">Virion</keyword>
<keyword id="KW-0862">Zinc</keyword>
<sequence length="296" mass="33507">MFGAFVSHRLWSDSGCTTTCITNSIANYVAFGEQIGFPFKSAQVFIAGPRKAVINIQKDDKVELLKMIDKHNLWVVAHGTYLDVPWSRRSAFVTHFIQQELLICKEVGIKGLVLHLGAVEPELIVEGLKKIKPVEGVIIYLETPHNKHHTYKYSTIEQIKELFLRIRNTGLKQIGLCIDTAHIWSSGVNISSYNSARQWLRSLEDIHSVIPPSHIMFHLNDAATKCGSGVDRHASLFEGMIWKSYSHKIKHSGLYCFVEYITRHQCPAILERNLGSSMQLQTALTAEFNTLKSFLK</sequence>